<name>PDL1_CAEEL</name>
<dbReference type="EMBL" id="FO080695">
    <property type="protein sequence ID" value="CCD65884.1"/>
    <property type="molecule type" value="Genomic_DNA"/>
</dbReference>
<dbReference type="PIR" id="T15671">
    <property type="entry name" value="T15671"/>
</dbReference>
<dbReference type="RefSeq" id="NP_495490.1">
    <property type="nucleotide sequence ID" value="NM_063089.3"/>
</dbReference>
<dbReference type="SMR" id="Q18268"/>
<dbReference type="BioGRID" id="56236">
    <property type="interactions" value="6"/>
</dbReference>
<dbReference type="DIP" id="DIP-26589N"/>
<dbReference type="FunCoup" id="Q18268">
    <property type="interactions" value="2343"/>
</dbReference>
<dbReference type="IntAct" id="Q18268">
    <property type="interactions" value="1"/>
</dbReference>
<dbReference type="STRING" id="6239.C27H5.1.1"/>
<dbReference type="PaxDb" id="6239-C27H5.1"/>
<dbReference type="EnsemblMetazoa" id="C27H5.1.1">
    <property type="protein sequence ID" value="C27H5.1.1"/>
    <property type="gene ID" value="WBGene00003966"/>
</dbReference>
<dbReference type="GeneID" id="191741"/>
<dbReference type="KEGG" id="cel:CELE_C27H5.1"/>
<dbReference type="UCSC" id="C27H5.1">
    <property type="organism name" value="c. elegans"/>
</dbReference>
<dbReference type="AGR" id="WB:WBGene00003966"/>
<dbReference type="CTD" id="191741"/>
<dbReference type="WormBase" id="C27H5.1">
    <property type="protein sequence ID" value="CE01175"/>
    <property type="gene ID" value="WBGene00003966"/>
    <property type="gene designation" value="pdl-1"/>
</dbReference>
<dbReference type="eggNOG" id="KOG4038">
    <property type="taxonomic scope" value="Eukaryota"/>
</dbReference>
<dbReference type="GeneTree" id="ENSGT00390000000263"/>
<dbReference type="HOGENOM" id="CLU_119682_0_0_1"/>
<dbReference type="InParanoid" id="Q18268"/>
<dbReference type="OMA" id="STNTWQN"/>
<dbReference type="OrthoDB" id="10248777at2759"/>
<dbReference type="PhylomeDB" id="Q18268"/>
<dbReference type="Reactome" id="R-CEL-9648002">
    <property type="pathway name" value="RAS processing"/>
</dbReference>
<dbReference type="PRO" id="PR:Q18268"/>
<dbReference type="Proteomes" id="UP000001940">
    <property type="component" value="Chromosome II"/>
</dbReference>
<dbReference type="Bgee" id="WBGene00003966">
    <property type="expression patterns" value="Expressed in pharyngeal muscle cell (C elegans) and 3 other cell types or tissues"/>
</dbReference>
<dbReference type="GO" id="GO:0005737">
    <property type="term" value="C:cytoplasm"/>
    <property type="evidence" value="ECO:0000318"/>
    <property type="project" value="GO_Central"/>
</dbReference>
<dbReference type="GO" id="GO:0050953">
    <property type="term" value="P:sensory perception of light stimulus"/>
    <property type="evidence" value="ECO:0007669"/>
    <property type="project" value="InterPro"/>
</dbReference>
<dbReference type="Gene3D" id="2.70.50.40">
    <property type="entry name" value="GMP phosphodiesterase, delta subunit"/>
    <property type="match status" value="1"/>
</dbReference>
<dbReference type="InterPro" id="IPR014756">
    <property type="entry name" value="Ig_E-set"/>
</dbReference>
<dbReference type="InterPro" id="IPR008015">
    <property type="entry name" value="PDED_dom"/>
</dbReference>
<dbReference type="InterPro" id="IPR037036">
    <property type="entry name" value="PDED_dom_sf"/>
</dbReference>
<dbReference type="InterPro" id="IPR017287">
    <property type="entry name" value="Rhodop-sen_GMP-Pdiesterase_dsu"/>
</dbReference>
<dbReference type="PANTHER" id="PTHR12976">
    <property type="entry name" value="RETINAL ROD RHODOPSIN-SENSITIVE CGMP 3',5'-CYCLIC PHOSPHODIESTERASE DELTA-SUBUNIT"/>
    <property type="match status" value="1"/>
</dbReference>
<dbReference type="PANTHER" id="PTHR12976:SF0">
    <property type="entry name" value="RETINAL ROD RHODOPSIN-SENSITIVE CGMP 3',5'-CYCLIC PHOSPHODIESTERASE SUBUNIT DELTA"/>
    <property type="match status" value="1"/>
</dbReference>
<dbReference type="Pfam" id="PF05351">
    <property type="entry name" value="GMP_PDE_delta"/>
    <property type="match status" value="1"/>
</dbReference>
<dbReference type="PIRSF" id="PIRSF037825">
    <property type="entry name" value="GMP-Pdiesterase_delta"/>
    <property type="match status" value="1"/>
</dbReference>
<dbReference type="SUPFAM" id="SSF81296">
    <property type="entry name" value="E set domains"/>
    <property type="match status" value="1"/>
</dbReference>
<reference key="1">
    <citation type="journal article" date="1998" name="Science">
        <title>Genome sequence of the nematode C. elegans: a platform for investigating biology.</title>
        <authorList>
            <consortium name="The C. elegans sequencing consortium"/>
        </authorList>
    </citation>
    <scope>NUCLEOTIDE SEQUENCE [LARGE SCALE GENOMIC DNA]</scope>
    <source>
        <strain>Bristol N2</strain>
    </source>
</reference>
<comment type="interaction">
    <interactant intactId="EBI-316181">
        <id>Q18268</id>
    </interactant>
    <interactant intactId="EBI-325438">
        <id>O45379</id>
        <label>arl-3</label>
    </interactant>
    <organismsDiffer>false</organismsDiffer>
    <experiments>4</experiments>
</comment>
<comment type="similarity">
    <text evidence="1">Belongs to the PDE6D/unc-119 family.</text>
</comment>
<evidence type="ECO:0000305" key="1"/>
<feature type="chain" id="PRO_0000221210" description="Phosphodiesterase delta-like protein">
    <location>
        <begin position="1"/>
        <end position="159"/>
    </location>
</feature>
<gene>
    <name type="primary">pdl-1</name>
    <name type="ORF">C27H5.1</name>
</gene>
<organism>
    <name type="scientific">Caenorhabditis elegans</name>
    <dbReference type="NCBI Taxonomy" id="6239"/>
    <lineage>
        <taxon>Eukaryota</taxon>
        <taxon>Metazoa</taxon>
        <taxon>Ecdysozoa</taxon>
        <taxon>Nematoda</taxon>
        <taxon>Chromadorea</taxon>
        <taxon>Rhabditida</taxon>
        <taxon>Rhabditina</taxon>
        <taxon>Rhabditomorpha</taxon>
        <taxon>Rhabditoidea</taxon>
        <taxon>Rhabditidae</taxon>
        <taxon>Peloderinae</taxon>
        <taxon>Caenorhabditis</taxon>
    </lineage>
</organism>
<proteinExistence type="evidence at protein level"/>
<sequence>MATTATRHQDSKLSEKAESILAGFKLNWMNLRDAETGKVLWQSTEDMADPKREHKAHVPKNLLKCRTVSREINFTSSVKIEKFRLEQRVYLKGTIIEEWYFDFGFVIPDSTNTWQNMIEAAPESQMFPPSVLSGNVVVETLFYDGDLLVSTSRVRLYYD</sequence>
<keyword id="KW-1185">Reference proteome</keyword>
<protein>
    <recommendedName>
        <fullName>Phosphodiesterase delta-like protein</fullName>
    </recommendedName>
</protein>
<accession>Q18268</accession>